<accession>P0A7L4</accession>
<accession>P02421</accession>
<accession>Q47253</accession>
<dbReference type="EMBL" id="AE014075">
    <property type="protein sequence ID" value="AAN80572.1"/>
    <property type="molecule type" value="Genomic_DNA"/>
</dbReference>
<dbReference type="RefSeq" id="WP_000124850.1">
    <property type="nucleotide sequence ID" value="NZ_CP051263.1"/>
</dbReference>
<dbReference type="SMR" id="P0A7L4"/>
<dbReference type="STRING" id="199310.c2113"/>
<dbReference type="GeneID" id="98388757"/>
<dbReference type="KEGG" id="ecc:c2113"/>
<dbReference type="eggNOG" id="COG0292">
    <property type="taxonomic scope" value="Bacteria"/>
</dbReference>
<dbReference type="HOGENOM" id="CLU_123265_0_1_6"/>
<dbReference type="BioCyc" id="ECOL199310:C2113-MONOMER"/>
<dbReference type="Proteomes" id="UP000001410">
    <property type="component" value="Chromosome"/>
</dbReference>
<dbReference type="GO" id="GO:1990904">
    <property type="term" value="C:ribonucleoprotein complex"/>
    <property type="evidence" value="ECO:0007669"/>
    <property type="project" value="UniProtKB-KW"/>
</dbReference>
<dbReference type="GO" id="GO:0005840">
    <property type="term" value="C:ribosome"/>
    <property type="evidence" value="ECO:0007669"/>
    <property type="project" value="UniProtKB-KW"/>
</dbReference>
<dbReference type="GO" id="GO:0019843">
    <property type="term" value="F:rRNA binding"/>
    <property type="evidence" value="ECO:0007669"/>
    <property type="project" value="UniProtKB-UniRule"/>
</dbReference>
<dbReference type="GO" id="GO:0003735">
    <property type="term" value="F:structural constituent of ribosome"/>
    <property type="evidence" value="ECO:0007669"/>
    <property type="project" value="InterPro"/>
</dbReference>
<dbReference type="GO" id="GO:0000027">
    <property type="term" value="P:ribosomal large subunit assembly"/>
    <property type="evidence" value="ECO:0007669"/>
    <property type="project" value="UniProtKB-UniRule"/>
</dbReference>
<dbReference type="GO" id="GO:0006412">
    <property type="term" value="P:translation"/>
    <property type="evidence" value="ECO:0007669"/>
    <property type="project" value="InterPro"/>
</dbReference>
<dbReference type="CDD" id="cd07026">
    <property type="entry name" value="Ribosomal_L20"/>
    <property type="match status" value="1"/>
</dbReference>
<dbReference type="FunFam" id="1.10.1900.20:FF:000001">
    <property type="entry name" value="50S ribosomal protein L20"/>
    <property type="match status" value="1"/>
</dbReference>
<dbReference type="Gene3D" id="6.10.160.10">
    <property type="match status" value="1"/>
</dbReference>
<dbReference type="Gene3D" id="1.10.1900.20">
    <property type="entry name" value="Ribosomal protein L20"/>
    <property type="match status" value="1"/>
</dbReference>
<dbReference type="HAMAP" id="MF_00382">
    <property type="entry name" value="Ribosomal_bL20"/>
    <property type="match status" value="1"/>
</dbReference>
<dbReference type="InterPro" id="IPR005813">
    <property type="entry name" value="Ribosomal_bL20"/>
</dbReference>
<dbReference type="InterPro" id="IPR049946">
    <property type="entry name" value="RIBOSOMAL_L20_CS"/>
</dbReference>
<dbReference type="InterPro" id="IPR035566">
    <property type="entry name" value="Ribosomal_protein_bL20_C"/>
</dbReference>
<dbReference type="NCBIfam" id="TIGR01032">
    <property type="entry name" value="rplT_bact"/>
    <property type="match status" value="1"/>
</dbReference>
<dbReference type="PANTHER" id="PTHR10986">
    <property type="entry name" value="39S RIBOSOMAL PROTEIN L20"/>
    <property type="match status" value="1"/>
</dbReference>
<dbReference type="Pfam" id="PF00453">
    <property type="entry name" value="Ribosomal_L20"/>
    <property type="match status" value="1"/>
</dbReference>
<dbReference type="PRINTS" id="PR00062">
    <property type="entry name" value="RIBOSOMALL20"/>
</dbReference>
<dbReference type="SUPFAM" id="SSF74731">
    <property type="entry name" value="Ribosomal protein L20"/>
    <property type="match status" value="1"/>
</dbReference>
<dbReference type="PROSITE" id="PS00937">
    <property type="entry name" value="RIBOSOMAL_L20"/>
    <property type="match status" value="1"/>
</dbReference>
<keyword id="KW-1185">Reference proteome</keyword>
<keyword id="KW-0687">Ribonucleoprotein</keyword>
<keyword id="KW-0689">Ribosomal protein</keyword>
<keyword id="KW-0694">RNA-binding</keyword>
<keyword id="KW-0699">rRNA-binding</keyword>
<name>RL20_ECOL6</name>
<comment type="function">
    <text evidence="1">Binds directly to 23S ribosomal RNA and is necessary for the in vitro assembly process of the 50S ribosomal subunit. It is not involved in the protein synthesizing functions of that subunit (By similarity).</text>
</comment>
<comment type="similarity">
    <text evidence="2">Belongs to the bacterial ribosomal protein bL20 family.</text>
</comment>
<evidence type="ECO:0000250" key="1"/>
<evidence type="ECO:0000305" key="2"/>
<feature type="initiator methionine" description="Removed" evidence="1">
    <location>
        <position position="1"/>
    </location>
</feature>
<feature type="chain" id="PRO_0000177158" description="Large ribosomal subunit protein bL20">
    <location>
        <begin position="2"/>
        <end position="118"/>
    </location>
</feature>
<reference key="1">
    <citation type="journal article" date="2002" name="Proc. Natl. Acad. Sci. U.S.A.">
        <title>Extensive mosaic structure revealed by the complete genome sequence of uropathogenic Escherichia coli.</title>
        <authorList>
            <person name="Welch R.A."/>
            <person name="Burland V."/>
            <person name="Plunkett G. III"/>
            <person name="Redford P."/>
            <person name="Roesch P."/>
            <person name="Rasko D."/>
            <person name="Buckles E.L."/>
            <person name="Liou S.-R."/>
            <person name="Boutin A."/>
            <person name="Hackett J."/>
            <person name="Stroud D."/>
            <person name="Mayhew G.F."/>
            <person name="Rose D.J."/>
            <person name="Zhou S."/>
            <person name="Schwartz D.C."/>
            <person name="Perna N.T."/>
            <person name="Mobley H.L.T."/>
            <person name="Donnenberg M.S."/>
            <person name="Blattner F.R."/>
        </authorList>
    </citation>
    <scope>NUCLEOTIDE SEQUENCE [LARGE SCALE GENOMIC DNA]</scope>
    <source>
        <strain>CFT073 / ATCC 700928 / UPEC</strain>
    </source>
</reference>
<protein>
    <recommendedName>
        <fullName evidence="2">Large ribosomal subunit protein bL20</fullName>
    </recommendedName>
    <alternativeName>
        <fullName>50S ribosomal protein L20</fullName>
    </alternativeName>
</protein>
<proteinExistence type="inferred from homology"/>
<organism>
    <name type="scientific">Escherichia coli O6:H1 (strain CFT073 / ATCC 700928 / UPEC)</name>
    <dbReference type="NCBI Taxonomy" id="199310"/>
    <lineage>
        <taxon>Bacteria</taxon>
        <taxon>Pseudomonadati</taxon>
        <taxon>Pseudomonadota</taxon>
        <taxon>Gammaproteobacteria</taxon>
        <taxon>Enterobacterales</taxon>
        <taxon>Enterobacteriaceae</taxon>
        <taxon>Escherichia</taxon>
    </lineage>
</organism>
<gene>
    <name type="primary">rplT</name>
    <name type="ordered locus">c2113</name>
</gene>
<sequence length="118" mass="13497">MARVKRGVIARARHKKILKQAKGYYGARSRVYRVAFQAVIKAGQYAYRDRRQRKRQFRQLWIARINAAARQNGISYSKFINGLKKASVEIDRKILADIAVFDKVAFTALVEKAKAALA</sequence>